<reference key="1">
    <citation type="journal article" date="2008" name="BMC Genomics">
        <title>The genome sequence of the fish pathogen Aliivibrio salmonicida strain LFI1238 shows extensive evidence of gene decay.</title>
        <authorList>
            <person name="Hjerde E."/>
            <person name="Lorentzen M.S."/>
            <person name="Holden M.T."/>
            <person name="Seeger K."/>
            <person name="Paulsen S."/>
            <person name="Bason N."/>
            <person name="Churcher C."/>
            <person name="Harris D."/>
            <person name="Norbertczak H."/>
            <person name="Quail M.A."/>
            <person name="Sanders S."/>
            <person name="Thurston S."/>
            <person name="Parkhill J."/>
            <person name="Willassen N.P."/>
            <person name="Thomson N.R."/>
        </authorList>
    </citation>
    <scope>NUCLEOTIDE SEQUENCE [LARGE SCALE GENOMIC DNA]</scope>
    <source>
        <strain>LFI1238</strain>
    </source>
</reference>
<keyword id="KW-0143">Chaperone</keyword>
<keyword id="KW-0963">Cytoplasm</keyword>
<evidence type="ECO:0000255" key="1">
    <source>
        <dbReference type="HAMAP-Rule" id="MF_01150"/>
    </source>
</evidence>
<dbReference type="EMBL" id="FM178379">
    <property type="protein sequence ID" value="CAQ79669.1"/>
    <property type="molecule type" value="Genomic_DNA"/>
</dbReference>
<dbReference type="RefSeq" id="WP_012550544.1">
    <property type="nucleotide sequence ID" value="NC_011312.1"/>
</dbReference>
<dbReference type="SMR" id="B6EH87"/>
<dbReference type="KEGG" id="vsa:VSAL_I1984"/>
<dbReference type="eggNOG" id="COG3381">
    <property type="taxonomic scope" value="Bacteria"/>
</dbReference>
<dbReference type="HOGENOM" id="CLU_077650_4_0_6"/>
<dbReference type="Proteomes" id="UP000001730">
    <property type="component" value="Chromosome 1"/>
</dbReference>
<dbReference type="GO" id="GO:0005737">
    <property type="term" value="C:cytoplasm"/>
    <property type="evidence" value="ECO:0007669"/>
    <property type="project" value="UniProtKB-SubCell"/>
</dbReference>
<dbReference type="GO" id="GO:0051259">
    <property type="term" value="P:protein complex oligomerization"/>
    <property type="evidence" value="ECO:0007669"/>
    <property type="project" value="InterPro"/>
</dbReference>
<dbReference type="GO" id="GO:0006457">
    <property type="term" value="P:protein folding"/>
    <property type="evidence" value="ECO:0007669"/>
    <property type="project" value="UniProtKB-UniRule"/>
</dbReference>
<dbReference type="Gene3D" id="1.20.120.1820">
    <property type="match status" value="1"/>
</dbReference>
<dbReference type="Gene3D" id="1.20.1280.20">
    <property type="entry name" value="HscB, C-terminal domain"/>
    <property type="match status" value="1"/>
</dbReference>
<dbReference type="HAMAP" id="MF_01150">
    <property type="entry name" value="TorD"/>
    <property type="match status" value="1"/>
</dbReference>
<dbReference type="InterPro" id="IPR023069">
    <property type="entry name" value="Chaperone_TorD"/>
</dbReference>
<dbReference type="InterPro" id="IPR020945">
    <property type="entry name" value="DMSO/NO3_reduct_chaperone"/>
</dbReference>
<dbReference type="InterPro" id="IPR036386">
    <property type="entry name" value="HscB_C_sf"/>
</dbReference>
<dbReference type="InterPro" id="IPR036411">
    <property type="entry name" value="TorD-like_sf"/>
</dbReference>
<dbReference type="InterPro" id="IPR050289">
    <property type="entry name" value="TorD/DmsD_chaperones"/>
</dbReference>
<dbReference type="NCBIfam" id="NF003442">
    <property type="entry name" value="PRK04976.1"/>
    <property type="match status" value="1"/>
</dbReference>
<dbReference type="PANTHER" id="PTHR34227:SF11">
    <property type="entry name" value="CHAPERONE PROTEIN TORD"/>
    <property type="match status" value="1"/>
</dbReference>
<dbReference type="PANTHER" id="PTHR34227">
    <property type="entry name" value="CHAPERONE PROTEIN YCDY"/>
    <property type="match status" value="1"/>
</dbReference>
<dbReference type="Pfam" id="PF02613">
    <property type="entry name" value="Nitrate_red_del"/>
    <property type="match status" value="1"/>
</dbReference>
<dbReference type="SUPFAM" id="SSF89155">
    <property type="entry name" value="TorD-like"/>
    <property type="match status" value="1"/>
</dbReference>
<organism>
    <name type="scientific">Aliivibrio salmonicida (strain LFI1238)</name>
    <name type="common">Vibrio salmonicida (strain LFI1238)</name>
    <dbReference type="NCBI Taxonomy" id="316275"/>
    <lineage>
        <taxon>Bacteria</taxon>
        <taxon>Pseudomonadati</taxon>
        <taxon>Pseudomonadota</taxon>
        <taxon>Gammaproteobacteria</taxon>
        <taxon>Vibrionales</taxon>
        <taxon>Vibrionaceae</taxon>
        <taxon>Aliivibrio</taxon>
    </lineage>
</organism>
<accession>B6EH87</accession>
<sequence>MNELNAFNEQRAEIYWWLSSLFAHELTKEQLEQYNSFEIRTFLTNLSETPELTDSISSIVTKLNELQTREDAQLELSADFCEAFLGSDKNSALPYASMYLDKSRLLNAKPAQDMRDLLEKYNITQKAEFNEPADHIAIELDFLGNLIVMTNQQTTEPEFEQFMAAQLQFINEQLLSWAPRFNQLCSERDTFGFYAAVTHFLVTFLELDVKFLAGE</sequence>
<protein>
    <recommendedName>
        <fullName evidence="1">Chaperone protein TorD</fullName>
    </recommendedName>
</protein>
<comment type="function">
    <text evidence="1">Involved in the biogenesis of TorA. Acts on TorA before the insertion of the molybdenum cofactor and, as a result, probably favors a conformation of the apoenzyme that is competent for acquiring the cofactor.</text>
</comment>
<comment type="subcellular location">
    <subcellularLocation>
        <location evidence="1">Cytoplasm</location>
    </subcellularLocation>
</comment>
<comment type="similarity">
    <text evidence="1">Belongs to the TorD/DmsD family. TorD subfamily.</text>
</comment>
<name>TORD_ALISL</name>
<gene>
    <name evidence="1" type="primary">torD</name>
    <name type="ordered locus">VSAL_I1984</name>
</gene>
<proteinExistence type="inferred from homology"/>
<feature type="chain" id="PRO_1000137502" description="Chaperone protein TorD">
    <location>
        <begin position="1"/>
        <end position="215"/>
    </location>
</feature>